<organism>
    <name type="scientific">Methanocaldococcus jannaschii (strain ATCC 43067 / DSM 2661 / JAL-1 / JCM 10045 / NBRC 100440)</name>
    <name type="common">Methanococcus jannaschii</name>
    <dbReference type="NCBI Taxonomy" id="243232"/>
    <lineage>
        <taxon>Archaea</taxon>
        <taxon>Methanobacteriati</taxon>
        <taxon>Methanobacteriota</taxon>
        <taxon>Methanomada group</taxon>
        <taxon>Methanococci</taxon>
        <taxon>Methanococcales</taxon>
        <taxon>Methanocaldococcaceae</taxon>
        <taxon>Methanocaldococcus</taxon>
    </lineage>
</organism>
<gene>
    <name evidence="1" type="primary">rnp2</name>
    <name type="ordered locus">MJ0494</name>
</gene>
<evidence type="ECO:0000255" key="1">
    <source>
        <dbReference type="HAMAP-Rule" id="MF_00755"/>
    </source>
</evidence>
<evidence type="ECO:0000269" key="2">
    <source>
    </source>
</evidence>
<evidence type="ECO:0000269" key="3">
    <source>
    </source>
</evidence>
<evidence type="ECO:0000269" key="4">
    <source>
    </source>
</evidence>
<proteinExistence type="evidence at protein level"/>
<reference key="1">
    <citation type="journal article" date="1996" name="Science">
        <title>Complete genome sequence of the methanogenic archaeon, Methanococcus jannaschii.</title>
        <authorList>
            <person name="Bult C.J."/>
            <person name="White O."/>
            <person name="Olsen G.J."/>
            <person name="Zhou L."/>
            <person name="Fleischmann R.D."/>
            <person name="Sutton G.G."/>
            <person name="Blake J.A."/>
            <person name="FitzGerald L.M."/>
            <person name="Clayton R.A."/>
            <person name="Gocayne J.D."/>
            <person name="Kerlavage A.R."/>
            <person name="Dougherty B.A."/>
            <person name="Tomb J.-F."/>
            <person name="Adams M.D."/>
            <person name="Reich C.I."/>
            <person name="Overbeek R."/>
            <person name="Kirkness E.F."/>
            <person name="Weinstock K.G."/>
            <person name="Merrick J.M."/>
            <person name="Glodek A."/>
            <person name="Scott J.L."/>
            <person name="Geoghagen N.S.M."/>
            <person name="Weidman J.F."/>
            <person name="Fuhrmann J.L."/>
            <person name="Nguyen D."/>
            <person name="Utterback T.R."/>
            <person name="Kelley J.M."/>
            <person name="Peterson J.D."/>
            <person name="Sadow P.W."/>
            <person name="Hanna M.C."/>
            <person name="Cotton M.D."/>
            <person name="Roberts K.M."/>
            <person name="Hurst M.A."/>
            <person name="Kaine B.P."/>
            <person name="Borodovsky M."/>
            <person name="Klenk H.-P."/>
            <person name="Fraser C.M."/>
            <person name="Smith H.O."/>
            <person name="Woese C.R."/>
            <person name="Venter J.C."/>
        </authorList>
    </citation>
    <scope>NUCLEOTIDE SEQUENCE [LARGE SCALE GENOMIC DNA]</scope>
    <source>
        <strain>ATCC 43067 / DSM 2661 / JAL-1 / JCM 10045 / NBRC 100440</strain>
    </source>
</reference>
<reference key="2">
    <citation type="journal article" date="2008" name="Nucleic Acids Res.">
        <title>Studies on Methanocaldococcus jannaschii RNase P reveal insights into the roles of RNA and protein cofactors in RNase P catalysis.</title>
        <authorList>
            <person name="Pulukkunat D.K."/>
            <person name="Gopalan V."/>
        </authorList>
    </citation>
    <scope>FUNCTION</scope>
    <scope>INTERACTION WITH RNP3</scope>
    <scope>SUBUNIT</scope>
    <source>
        <strain>ATCC 43067 / DSM 2661 / JAL-1 / JCM 10045 / NBRC 100440</strain>
    </source>
</reference>
<reference key="3">
    <citation type="journal article" date="2011" name="J. Mol. Biol.">
        <title>Cooperative RNP assembly: complementary rescue of structural defects by protein and RNA subunits of archaeal RNase P.</title>
        <authorList>
            <person name="Chen W.Y."/>
            <person name="Xu Y."/>
            <person name="Cho I.M."/>
            <person name="Oruganti S.V."/>
            <person name="Foster M.P."/>
            <person name="Gopalan V."/>
        </authorList>
    </citation>
    <scope>FUNCTION</scope>
    <scope>INTERACTION WITH RNP3</scope>
    <scope>SUBUNIT</scope>
    <source>
        <strain>ATCC 43067 / DSM 2661 / JAL-1 / JCM 10045 / NBRC 100440</strain>
    </source>
</reference>
<reference key="4">
    <citation type="journal article" date="2012" name="Nucleic Acids Res.">
        <title>Fidelity of tRNA 5'-maturation: a possible basis for the functional dependence of archaeal and eukaryal RNase P on multiple protein cofactors.</title>
        <authorList>
            <person name="Chen W.Y."/>
            <person name="Singh D."/>
            <person name="Lai L.B."/>
            <person name="Stiffler M.A."/>
            <person name="Lai H.D."/>
            <person name="Foster M.P."/>
            <person name="Gopalan V."/>
        </authorList>
    </citation>
    <scope>FUNCTION</scope>
    <scope>INTERACTION WITH RNP3</scope>
    <scope>SUBUNIT</scope>
</reference>
<sequence>MIEMLKTLPPTLREKKRYIAFKILYDEELKEGEVVNLIRKAVLEYYGSWGTSKANPWLVYYDFPYGILRCQRDNVDYVKASLILIREFKEKPVNIICLGVSGTIRKAKIKFLGIKKPKRWFVIRRERLKAKKQK</sequence>
<keyword id="KW-0002">3D-structure</keyword>
<keyword id="KW-0963">Cytoplasm</keyword>
<keyword id="KW-0255">Endonuclease</keyword>
<keyword id="KW-0378">Hydrolase</keyword>
<keyword id="KW-0540">Nuclease</keyword>
<keyword id="KW-1185">Reference proteome</keyword>
<keyword id="KW-0819">tRNA processing</keyword>
<feature type="chain" id="PRO_0000140020" description="Ribonuclease P protein component 2">
    <location>
        <begin position="1"/>
        <end position="134"/>
    </location>
</feature>
<protein>
    <recommendedName>
        <fullName evidence="1">Ribonuclease P protein component 2</fullName>
        <shortName evidence="1">RNase P component 2</shortName>
        <ecNumber evidence="1">3.1.26.5</ecNumber>
    </recommendedName>
    <alternativeName>
        <fullName evidence="1">Pop5</fullName>
    </alternativeName>
</protein>
<comment type="function">
    <text evidence="1 2 3 4">Part of ribonuclease P, a protein complex that generates mature tRNA molecules by cleaving their 5'-ends.</text>
</comment>
<comment type="catalytic activity">
    <reaction evidence="1">
        <text>Endonucleolytic cleavage of RNA, removing 5'-extranucleotides from tRNA precursor.</text>
        <dbReference type="EC" id="3.1.26.5"/>
    </reaction>
</comment>
<comment type="subunit">
    <text evidence="1 2 3 4">Consists of a catalytic RNA component and at least 4-5 protein subunits. Forms a subcomplex with Rnp3 which stimulates the catalytic RNA.</text>
</comment>
<comment type="subcellular location">
    <subcellularLocation>
        <location evidence="1">Cytoplasm</location>
    </subcellularLocation>
</comment>
<comment type="similarity">
    <text evidence="1">Belongs to the eukaryotic/archaeal RNase P protein component 2 family.</text>
</comment>
<name>RNP2_METJA</name>
<accession>Q57917</accession>
<dbReference type="EC" id="3.1.26.5" evidence="1"/>
<dbReference type="EMBL" id="L77117">
    <property type="protein sequence ID" value="AAB98484.1"/>
    <property type="molecule type" value="Genomic_DNA"/>
</dbReference>
<dbReference type="PIR" id="F64361">
    <property type="entry name" value="F64361"/>
</dbReference>
<dbReference type="PDB" id="6K0A">
    <property type="method" value="EM"/>
    <property type="resolution" value="4.60 A"/>
    <property type="chains" value="A/B=1-134"/>
</dbReference>
<dbReference type="PDB" id="6K0B">
    <property type="method" value="EM"/>
    <property type="resolution" value="4.30 A"/>
    <property type="chains" value="A/B=1-134"/>
</dbReference>
<dbReference type="PDBsum" id="6K0A"/>
<dbReference type="PDBsum" id="6K0B"/>
<dbReference type="EMDB" id="EMD-9900"/>
<dbReference type="SMR" id="Q57917"/>
<dbReference type="STRING" id="243232.MJ_0494"/>
<dbReference type="PaxDb" id="243232-MJ_0494"/>
<dbReference type="EnsemblBacteria" id="AAB98484">
    <property type="protein sequence ID" value="AAB98484"/>
    <property type="gene ID" value="MJ_0494"/>
</dbReference>
<dbReference type="KEGG" id="mja:MJ_0494"/>
<dbReference type="eggNOG" id="arCOG01365">
    <property type="taxonomic scope" value="Archaea"/>
</dbReference>
<dbReference type="HOGENOM" id="CLU_137733_1_0_2"/>
<dbReference type="InParanoid" id="Q57917"/>
<dbReference type="PhylomeDB" id="Q57917"/>
<dbReference type="Proteomes" id="UP000000805">
    <property type="component" value="Chromosome"/>
</dbReference>
<dbReference type="GO" id="GO:0005737">
    <property type="term" value="C:cytoplasm"/>
    <property type="evidence" value="ECO:0007669"/>
    <property type="project" value="UniProtKB-SubCell"/>
</dbReference>
<dbReference type="GO" id="GO:0030677">
    <property type="term" value="C:ribonuclease P complex"/>
    <property type="evidence" value="ECO:0007669"/>
    <property type="project" value="UniProtKB-UniRule"/>
</dbReference>
<dbReference type="GO" id="GO:0004526">
    <property type="term" value="F:ribonuclease P activity"/>
    <property type="evidence" value="ECO:0007669"/>
    <property type="project" value="UniProtKB-UniRule"/>
</dbReference>
<dbReference type="GO" id="GO:0001682">
    <property type="term" value="P:tRNA 5'-leader removal"/>
    <property type="evidence" value="ECO:0007669"/>
    <property type="project" value="UniProtKB-UniRule"/>
</dbReference>
<dbReference type="FunFam" id="3.30.70.3250:FF:000007">
    <property type="entry name" value="Ribonuclease P protein component 2"/>
    <property type="match status" value="1"/>
</dbReference>
<dbReference type="Gene3D" id="3.30.70.3250">
    <property type="entry name" value="Ribonuclease P, Pop5 subunit"/>
    <property type="match status" value="1"/>
</dbReference>
<dbReference type="HAMAP" id="MF_00755">
    <property type="entry name" value="RNase_P_2"/>
    <property type="match status" value="1"/>
</dbReference>
<dbReference type="InterPro" id="IPR002759">
    <property type="entry name" value="Pop5/Rpp14/Rnp2-like"/>
</dbReference>
<dbReference type="InterPro" id="IPR038085">
    <property type="entry name" value="Rnp2-like_sf"/>
</dbReference>
<dbReference type="InterPro" id="IPR016434">
    <property type="entry name" value="Rnp2_archaea"/>
</dbReference>
<dbReference type="PANTHER" id="PTHR15441">
    <property type="entry name" value="RIBONUCLEASE P PROTEIN SUBUNIT P14"/>
    <property type="match status" value="1"/>
</dbReference>
<dbReference type="PANTHER" id="PTHR15441:SF2">
    <property type="entry name" value="RIBONUCLEASE P_MRP PROTEIN SUBUNIT POP5"/>
    <property type="match status" value="1"/>
</dbReference>
<dbReference type="Pfam" id="PF01900">
    <property type="entry name" value="RNase_P_Rpp14"/>
    <property type="match status" value="1"/>
</dbReference>
<dbReference type="PIRSF" id="PIRSF004952">
    <property type="entry name" value="RNase_P_2"/>
    <property type="match status" value="1"/>
</dbReference>
<dbReference type="SUPFAM" id="SSF160350">
    <property type="entry name" value="Rnp2-like"/>
    <property type="match status" value="1"/>
</dbReference>